<dbReference type="EMBL" id="AL583918">
    <property type="protein sequence ID" value="CAC30064.1"/>
    <property type="molecule type" value="Genomic_DNA"/>
</dbReference>
<dbReference type="PIR" id="D86978">
    <property type="entry name" value="D86978"/>
</dbReference>
<dbReference type="RefSeq" id="NP_301470.1">
    <property type="nucleotide sequence ID" value="NC_002677.1"/>
</dbReference>
<dbReference type="RefSeq" id="WP_010907794.1">
    <property type="nucleotide sequence ID" value="NC_002677.1"/>
</dbReference>
<dbReference type="SMR" id="Q9CCP7"/>
<dbReference type="STRING" id="272631.gene:17574377"/>
<dbReference type="KEGG" id="mle:ML0556"/>
<dbReference type="PATRIC" id="fig|272631.5.peg.967"/>
<dbReference type="Leproma" id="ML0556"/>
<dbReference type="eggNOG" id="COG0477">
    <property type="taxonomic scope" value="Bacteria"/>
</dbReference>
<dbReference type="HOGENOM" id="CLU_000960_2_5_11"/>
<dbReference type="OrthoDB" id="3453194at2"/>
<dbReference type="Proteomes" id="UP000000806">
    <property type="component" value="Chromosome"/>
</dbReference>
<dbReference type="GO" id="GO:0005886">
    <property type="term" value="C:plasma membrane"/>
    <property type="evidence" value="ECO:0007669"/>
    <property type="project" value="UniProtKB-SubCell"/>
</dbReference>
<dbReference type="GO" id="GO:0022857">
    <property type="term" value="F:transmembrane transporter activity"/>
    <property type="evidence" value="ECO:0007669"/>
    <property type="project" value="InterPro"/>
</dbReference>
<dbReference type="CDD" id="cd17321">
    <property type="entry name" value="MFS_MMR_MDR_like"/>
    <property type="match status" value="1"/>
</dbReference>
<dbReference type="Gene3D" id="1.20.1250.20">
    <property type="entry name" value="MFS general substrate transporter like domains"/>
    <property type="match status" value="1"/>
</dbReference>
<dbReference type="Gene3D" id="1.20.1720.10">
    <property type="entry name" value="Multidrug resistance protein D"/>
    <property type="match status" value="1"/>
</dbReference>
<dbReference type="InterPro" id="IPR011701">
    <property type="entry name" value="MFS"/>
</dbReference>
<dbReference type="InterPro" id="IPR020846">
    <property type="entry name" value="MFS_dom"/>
</dbReference>
<dbReference type="InterPro" id="IPR036259">
    <property type="entry name" value="MFS_trans_sf"/>
</dbReference>
<dbReference type="InterPro" id="IPR005829">
    <property type="entry name" value="Sugar_transporter_CS"/>
</dbReference>
<dbReference type="PANTHER" id="PTHR23501">
    <property type="entry name" value="MAJOR FACILITATOR SUPERFAMILY"/>
    <property type="match status" value="1"/>
</dbReference>
<dbReference type="PANTHER" id="PTHR23501:SF191">
    <property type="entry name" value="VACUOLAR BASIC AMINO ACID TRANSPORTER 4"/>
    <property type="match status" value="1"/>
</dbReference>
<dbReference type="Pfam" id="PF07690">
    <property type="entry name" value="MFS_1"/>
    <property type="match status" value="1"/>
</dbReference>
<dbReference type="SUPFAM" id="SSF103473">
    <property type="entry name" value="MFS general substrate transporter"/>
    <property type="match status" value="1"/>
</dbReference>
<dbReference type="PROSITE" id="PS50850">
    <property type="entry name" value="MFS"/>
    <property type="match status" value="1"/>
</dbReference>
<dbReference type="PROSITE" id="PS00216">
    <property type="entry name" value="SUGAR_TRANSPORT_1"/>
    <property type="match status" value="1"/>
</dbReference>
<name>MFS55_MYCLE</name>
<gene>
    <name type="ordered locus">ML0556</name>
</gene>
<keyword id="KW-0997">Cell inner membrane</keyword>
<keyword id="KW-1003">Cell membrane</keyword>
<keyword id="KW-0472">Membrane</keyword>
<keyword id="KW-1185">Reference proteome</keyword>
<keyword id="KW-0812">Transmembrane</keyword>
<keyword id="KW-1133">Transmembrane helix</keyword>
<keyword id="KW-0813">Transport</keyword>
<protein>
    <recommendedName>
        <fullName evidence="1">Probable triacylglyceride transporter ML0556</fullName>
    </recommendedName>
    <alternativeName>
        <fullName>MFS-type drug efflux transporter P55</fullName>
    </alternativeName>
</protein>
<organism>
    <name type="scientific">Mycobacterium leprae (strain TN)</name>
    <dbReference type="NCBI Taxonomy" id="272631"/>
    <lineage>
        <taxon>Bacteria</taxon>
        <taxon>Bacillati</taxon>
        <taxon>Actinomycetota</taxon>
        <taxon>Actinomycetes</taxon>
        <taxon>Mycobacteriales</taxon>
        <taxon>Mycobacteriaceae</taxon>
        <taxon>Mycobacterium</taxon>
    </lineage>
</organism>
<accession>Q9CCP7</accession>
<proteinExistence type="inferred from homology"/>
<comment type="function">
    <text evidence="1">In association with lipoprotein LprG probably transports triacylglycerides (TAG) across the inner cell membrane into the periplasm; TAG probably regulates lipid metabolism and growth regulation. May be an efflux transporter and involved in maintaining correct cell wall permeability. Probably required with LprG for normal surface localization of lipoarabinomannan (LAM).</text>
</comment>
<comment type="subcellular location">
    <subcellularLocation>
        <location evidence="2">Cell inner membrane</location>
        <topology evidence="2">Multi-pass membrane protein</topology>
    </subcellularLocation>
</comment>
<comment type="miscellaneous">
    <text evidence="3">Bacterial LAM blocks host cell phagosome-lysosome fusion and is one way in which Mycobacteria evade the host immune system.</text>
</comment>
<comment type="miscellaneous">
    <text evidence="3">Triacylglycerides accumulate in lipid droplets in the cytoplasm of M.leprae, and are used as an energy source during starvation.</text>
</comment>
<comment type="similarity">
    <text evidence="3">Belongs to the major facilitator superfamily.</text>
</comment>
<sequence length="509" mass="53712">MSTRAGRRVAISAGSLAVLLGALDTYVVVTIMRDIMHDVGIPVNQMQRITWIVTMYLLGYIAAMPLLSRASDRFGRKLLLQVSLAGFAIGSVMTALAGQFGDFHMLIAGRTIQGVASGALLPITLALGADLWAQRNRAGVLGGIGAAQELGSVLGPLYGIFIVWLFSDWRYVFWINIPLTAIAMLMIQVSLSAHDRGDELEKVDVVGGVLLAIALGLVVIGLYNPQPDSKQVLPSYGVPVLVGGIVATVAFAVWERCARTRLIDPAGVHIRPFLSALGASVAAGAALMVTLVNVELFGQGVLGMDQTQAAGLLVWFLIALPIGAVLGGWGATKAGDRTMTFVGLLITAGGYWLISHWPVDLLNYRRSIFGLFSVPTMYADLLVAGLGLGLVIGPLSSATLRVVPTAQHGIASAAVVVARMTGMLIGVAALTAWGLYRFNQILAGLSTAVPPDATLIERAAAVADQAKRAYTMMYSDIFMITAIVCVIGALLGLLISSRKEHASEPKVPE</sequence>
<evidence type="ECO:0000250" key="1">
    <source>
        <dbReference type="UniProtKB" id="P9WJY3"/>
    </source>
</evidence>
<evidence type="ECO:0000255" key="2"/>
<evidence type="ECO:0000305" key="3"/>
<reference key="1">
    <citation type="journal article" date="2001" name="Nature">
        <title>Massive gene decay in the leprosy bacillus.</title>
        <authorList>
            <person name="Cole S.T."/>
            <person name="Eiglmeier K."/>
            <person name="Parkhill J."/>
            <person name="James K.D."/>
            <person name="Thomson N.R."/>
            <person name="Wheeler P.R."/>
            <person name="Honore N."/>
            <person name="Garnier T."/>
            <person name="Churcher C.M."/>
            <person name="Harris D.E."/>
            <person name="Mungall K.L."/>
            <person name="Basham D."/>
            <person name="Brown D."/>
            <person name="Chillingworth T."/>
            <person name="Connor R."/>
            <person name="Davies R.M."/>
            <person name="Devlin K."/>
            <person name="Duthoy S."/>
            <person name="Feltwell T."/>
            <person name="Fraser A."/>
            <person name="Hamlin N."/>
            <person name="Holroyd S."/>
            <person name="Hornsby T."/>
            <person name="Jagels K."/>
            <person name="Lacroix C."/>
            <person name="Maclean J."/>
            <person name="Moule S."/>
            <person name="Murphy L.D."/>
            <person name="Oliver K."/>
            <person name="Quail M.A."/>
            <person name="Rajandream M.A."/>
            <person name="Rutherford K.M."/>
            <person name="Rutter S."/>
            <person name="Seeger K."/>
            <person name="Simon S."/>
            <person name="Simmonds M."/>
            <person name="Skelton J."/>
            <person name="Squares R."/>
            <person name="Squares S."/>
            <person name="Stevens K."/>
            <person name="Taylor K."/>
            <person name="Whitehead S."/>
            <person name="Woodward J.R."/>
            <person name="Barrell B.G."/>
        </authorList>
    </citation>
    <scope>NUCLEOTIDE SEQUENCE [LARGE SCALE GENOMIC DNA]</scope>
    <source>
        <strain>TN</strain>
    </source>
</reference>
<feature type="chain" id="PRO_0000434647" description="Probable triacylglyceride transporter ML0556">
    <location>
        <begin position="1"/>
        <end position="509"/>
    </location>
</feature>
<feature type="transmembrane region" description="Helical" evidence="2">
    <location>
        <begin position="48"/>
        <end position="68"/>
    </location>
</feature>
<feature type="transmembrane region" description="Helical" evidence="2">
    <location>
        <begin position="78"/>
        <end position="98"/>
    </location>
</feature>
<feature type="transmembrane region" description="Helical" evidence="2">
    <location>
        <begin position="112"/>
        <end position="132"/>
    </location>
</feature>
<feature type="transmembrane region" description="Helical" evidence="2">
    <location>
        <begin position="146"/>
        <end position="166"/>
    </location>
</feature>
<feature type="transmembrane region" description="Helical" evidence="2">
    <location>
        <begin position="171"/>
        <end position="191"/>
    </location>
</feature>
<feature type="transmembrane region" description="Helical" evidence="2">
    <location>
        <begin position="203"/>
        <end position="223"/>
    </location>
</feature>
<feature type="transmembrane region" description="Helical" evidence="2">
    <location>
        <begin position="232"/>
        <end position="252"/>
    </location>
</feature>
<feature type="transmembrane region" description="Helical" evidence="2">
    <location>
        <begin position="272"/>
        <end position="292"/>
    </location>
</feature>
<feature type="transmembrane region" description="Helical" evidence="2">
    <location>
        <begin position="309"/>
        <end position="329"/>
    </location>
</feature>
<feature type="transmembrane region" description="Helical" evidence="2">
    <location>
        <begin position="339"/>
        <end position="359"/>
    </location>
</feature>
<feature type="transmembrane region" description="Helical" evidence="2">
    <location>
        <begin position="381"/>
        <end position="403"/>
    </location>
</feature>
<feature type="transmembrane region" description="Helical" evidence="2">
    <location>
        <begin position="410"/>
        <end position="430"/>
    </location>
</feature>
<feature type="transmembrane region" description="Helical" evidence="2">
    <location>
        <begin position="477"/>
        <end position="497"/>
    </location>
</feature>